<evidence type="ECO:0000255" key="1">
    <source>
        <dbReference type="HAMAP-Rule" id="MF_01313"/>
    </source>
</evidence>
<evidence type="ECO:0000305" key="2"/>
<protein>
    <recommendedName>
        <fullName evidence="1">Nitric oxide reductase FlRd-NAD(+) reductase</fullName>
        <ecNumber evidence="1">1.18.1.-</ecNumber>
    </recommendedName>
    <alternativeName>
        <fullName evidence="1">Flavorubredoxin reductase</fullName>
        <shortName evidence="1">FlRd-reductase</shortName>
        <shortName evidence="1">FlavoRb reductase</shortName>
    </alternativeName>
</protein>
<proteinExistence type="inferred from homology"/>
<organism>
    <name type="scientific">Vibrio vulnificus (strain YJ016)</name>
    <dbReference type="NCBI Taxonomy" id="196600"/>
    <lineage>
        <taxon>Bacteria</taxon>
        <taxon>Pseudomonadati</taxon>
        <taxon>Pseudomonadota</taxon>
        <taxon>Gammaproteobacteria</taxon>
        <taxon>Vibrionales</taxon>
        <taxon>Vibrionaceae</taxon>
        <taxon>Vibrio</taxon>
    </lineage>
</organism>
<keyword id="KW-0963">Cytoplasm</keyword>
<keyword id="KW-0274">FAD</keyword>
<keyword id="KW-0285">Flavoprotein</keyword>
<keyword id="KW-0520">NAD</keyword>
<keyword id="KW-0560">Oxidoreductase</keyword>
<name>NORW_VIBVY</name>
<dbReference type="EC" id="1.18.1.-" evidence="1"/>
<dbReference type="EMBL" id="BA000038">
    <property type="protein sequence ID" value="BAC96208.1"/>
    <property type="status" value="ALT_INIT"/>
    <property type="molecule type" value="Genomic_DNA"/>
</dbReference>
<dbReference type="RefSeq" id="WP_043877431.1">
    <property type="nucleotide sequence ID" value="NC_005140.1"/>
</dbReference>
<dbReference type="SMR" id="Q7MFY7"/>
<dbReference type="KEGG" id="vvy:VVA0182"/>
<dbReference type="PATRIC" id="fig|196600.6.peg.3394"/>
<dbReference type="HOGENOM" id="CLU_003291_4_4_6"/>
<dbReference type="UniPathway" id="UPA00638"/>
<dbReference type="Proteomes" id="UP000002675">
    <property type="component" value="Chromosome II"/>
</dbReference>
<dbReference type="GO" id="GO:0005737">
    <property type="term" value="C:cytoplasm"/>
    <property type="evidence" value="ECO:0007669"/>
    <property type="project" value="UniProtKB-SubCell"/>
</dbReference>
<dbReference type="GO" id="GO:0016731">
    <property type="term" value="F:oxidoreductase activity, acting on iron-sulfur proteins as donors, NAD or NADP as acceptor"/>
    <property type="evidence" value="ECO:0007669"/>
    <property type="project" value="UniProtKB-UniRule"/>
</dbReference>
<dbReference type="Gene3D" id="3.30.390.120">
    <property type="match status" value="1"/>
</dbReference>
<dbReference type="Gene3D" id="3.50.50.60">
    <property type="entry name" value="FAD/NAD(P)-binding domain"/>
    <property type="match status" value="2"/>
</dbReference>
<dbReference type="HAMAP" id="MF_01313">
    <property type="entry name" value="NorW"/>
    <property type="match status" value="1"/>
</dbReference>
<dbReference type="InterPro" id="IPR050260">
    <property type="entry name" value="FAD-bd_OxRdtase"/>
</dbReference>
<dbReference type="InterPro" id="IPR036188">
    <property type="entry name" value="FAD/NAD-bd_sf"/>
</dbReference>
<dbReference type="InterPro" id="IPR023753">
    <property type="entry name" value="FAD/NAD-binding_dom"/>
</dbReference>
<dbReference type="InterPro" id="IPR023961">
    <property type="entry name" value="NO_rdtase_NorW"/>
</dbReference>
<dbReference type="InterPro" id="IPR041364">
    <property type="entry name" value="Rbx-bd"/>
</dbReference>
<dbReference type="NCBIfam" id="NF003437">
    <property type="entry name" value="PRK04965.1"/>
    <property type="match status" value="1"/>
</dbReference>
<dbReference type="PANTHER" id="PTHR43429:SF3">
    <property type="entry name" value="NITRITE REDUCTASE [NAD(P)H]"/>
    <property type="match status" value="1"/>
</dbReference>
<dbReference type="PANTHER" id="PTHR43429">
    <property type="entry name" value="PYRIDINE NUCLEOTIDE-DISULFIDE OXIDOREDUCTASE DOMAIN-CONTAINING"/>
    <property type="match status" value="1"/>
</dbReference>
<dbReference type="Pfam" id="PF07992">
    <property type="entry name" value="Pyr_redox_2"/>
    <property type="match status" value="1"/>
</dbReference>
<dbReference type="Pfam" id="PF18113">
    <property type="entry name" value="Rbx_binding"/>
    <property type="match status" value="1"/>
</dbReference>
<dbReference type="PRINTS" id="PR00368">
    <property type="entry name" value="FADPNR"/>
</dbReference>
<dbReference type="PRINTS" id="PR00411">
    <property type="entry name" value="PNDRDTASEI"/>
</dbReference>
<dbReference type="SUPFAM" id="SSF51905">
    <property type="entry name" value="FAD/NAD(P)-binding domain"/>
    <property type="match status" value="1"/>
</dbReference>
<feature type="chain" id="PRO_0000167670" description="Nitric oxide reductase FlRd-NAD(+) reductase">
    <location>
        <begin position="1"/>
        <end position="382"/>
    </location>
</feature>
<sequence length="382" mass="41155">MSDPIIIIGSGFAAYQLVKSVRRLDAHIPIQIFTADDGAEYNKPDLSHVFSKRQTAADLVVKSGEAFATEHNVQLHAHTQVERVLTQQQQVVANGRCYPYSKLVFATGAQAFVPPMRGDGLAKVMTLNSLQEYQAAEQPLSRAQHVLVIGGGLIGVEIALDLATSGKQVTVVEPNARLLANLLPEFIALPLEQQLMKHGIQLALNSRVESVTVQGQTLAIALHDGREFAVDAVLCAAGLKANTAVAREAGLSVERGICVDLQLNTSDPHIYALGDCAQIEGRMLPYLQPIVLSANVLAKQLVGQEARLTLPPMMVKVKTPSYPIQLAGDFSPESHWQVQLSPEGIVAKAQSSLGDFTGFVVTGEYVTQAFPLLRELSQRANG</sequence>
<gene>
    <name evidence="1" type="primary">norW</name>
    <name evidence="1" type="synonym">flrR</name>
    <name type="ordered locus">VVA0182</name>
</gene>
<reference key="1">
    <citation type="journal article" date="2003" name="Genome Res.">
        <title>Comparative genome analysis of Vibrio vulnificus, a marine pathogen.</title>
        <authorList>
            <person name="Chen C.-Y."/>
            <person name="Wu K.-M."/>
            <person name="Chang Y.-C."/>
            <person name="Chang C.-H."/>
            <person name="Tsai H.-C."/>
            <person name="Liao T.-L."/>
            <person name="Liu Y.-M."/>
            <person name="Chen H.-J."/>
            <person name="Shen A.B.-T."/>
            <person name="Li J.-C."/>
            <person name="Su T.-L."/>
            <person name="Shao C.-P."/>
            <person name="Lee C.-T."/>
            <person name="Hor L.-I."/>
            <person name="Tsai S.-F."/>
        </authorList>
    </citation>
    <scope>NUCLEOTIDE SEQUENCE [LARGE SCALE GENOMIC DNA]</scope>
    <source>
        <strain>YJ016</strain>
    </source>
</reference>
<accession>Q7MFY7</accession>
<comment type="function">
    <text evidence="1">One of at least two accessory proteins for anaerobic nitric oxide (NO) reductase. Reduces the rubredoxin moiety of NO reductase.</text>
</comment>
<comment type="catalytic activity">
    <reaction evidence="1">
        <text>2 reduced [nitric oxide reductase rubredoxin domain] + NAD(+) + H(+) = 2 oxidized [nitric oxide reductase rubredoxin domain] + NADH</text>
        <dbReference type="Rhea" id="RHEA:42960"/>
        <dbReference type="Rhea" id="RHEA-COMP:10304"/>
        <dbReference type="Rhea" id="RHEA-COMP:10305"/>
        <dbReference type="ChEBI" id="CHEBI:15378"/>
        <dbReference type="ChEBI" id="CHEBI:29033"/>
        <dbReference type="ChEBI" id="CHEBI:29034"/>
        <dbReference type="ChEBI" id="CHEBI:57540"/>
        <dbReference type="ChEBI" id="CHEBI:57945"/>
    </reaction>
</comment>
<comment type="cofactor">
    <cofactor evidence="1">
        <name>FAD</name>
        <dbReference type="ChEBI" id="CHEBI:57692"/>
    </cofactor>
</comment>
<comment type="pathway">
    <text evidence="1">Nitrogen metabolism; nitric oxide reduction.</text>
</comment>
<comment type="subcellular location">
    <subcellularLocation>
        <location evidence="1">Cytoplasm</location>
    </subcellularLocation>
</comment>
<comment type="similarity">
    <text evidence="1">Belongs to the FAD-dependent oxidoreductase family.</text>
</comment>
<comment type="sequence caution" evidence="2">
    <conflict type="erroneous initiation">
        <sequence resource="EMBL-CDS" id="BAC96208"/>
    </conflict>
</comment>